<comment type="similarity">
    <text evidence="1">Belongs to the Smg family.</text>
</comment>
<evidence type="ECO:0000255" key="1">
    <source>
        <dbReference type="HAMAP-Rule" id="MF_00598"/>
    </source>
</evidence>
<sequence length="158" mass="18482">MKENVLDVLMYLFENYIDEDTEIEPDRIQLQDKLLEAGFPGAEIDRAFDWLENLANQEDQPLGQARHDSALRVYTDREVERLDARARGFLLFLEQNGVLDAGTRELVIDRIMDLDAEDISLDQLKWVTLMVLFNRPDQEAAYTWLESMMFDSPPEFLH</sequence>
<accession>B8GU08</accession>
<proteinExistence type="inferred from homology"/>
<dbReference type="EMBL" id="CP001339">
    <property type="protein sequence ID" value="ACL71291.1"/>
    <property type="molecule type" value="Genomic_DNA"/>
</dbReference>
<dbReference type="RefSeq" id="WP_012636780.1">
    <property type="nucleotide sequence ID" value="NC_011901.1"/>
</dbReference>
<dbReference type="SMR" id="B8GU08"/>
<dbReference type="STRING" id="396588.Tgr7_0192"/>
<dbReference type="KEGG" id="tgr:Tgr7_0192"/>
<dbReference type="eggNOG" id="COG2922">
    <property type="taxonomic scope" value="Bacteria"/>
</dbReference>
<dbReference type="HOGENOM" id="CLU_133242_0_0_6"/>
<dbReference type="OrthoDB" id="9788984at2"/>
<dbReference type="Proteomes" id="UP000002383">
    <property type="component" value="Chromosome"/>
</dbReference>
<dbReference type="HAMAP" id="MF_00598">
    <property type="entry name" value="Smg"/>
    <property type="match status" value="1"/>
</dbReference>
<dbReference type="InterPro" id="IPR007456">
    <property type="entry name" value="Smg"/>
</dbReference>
<dbReference type="NCBIfam" id="NF002897">
    <property type="entry name" value="PRK03430.1"/>
    <property type="match status" value="1"/>
</dbReference>
<dbReference type="PANTHER" id="PTHR38692">
    <property type="entry name" value="PROTEIN SMG"/>
    <property type="match status" value="1"/>
</dbReference>
<dbReference type="PANTHER" id="PTHR38692:SF1">
    <property type="entry name" value="PROTEIN SMG"/>
    <property type="match status" value="1"/>
</dbReference>
<dbReference type="Pfam" id="PF04361">
    <property type="entry name" value="DUF494"/>
    <property type="match status" value="1"/>
</dbReference>
<keyword id="KW-1185">Reference proteome</keyword>
<name>SMG_THISH</name>
<reference key="1">
    <citation type="journal article" date="2011" name="Stand. Genomic Sci.">
        <title>Complete genome sequence of 'Thioalkalivibrio sulfidophilus' HL-EbGr7.</title>
        <authorList>
            <person name="Muyzer G."/>
            <person name="Sorokin D.Y."/>
            <person name="Mavromatis K."/>
            <person name="Lapidus A."/>
            <person name="Clum A."/>
            <person name="Ivanova N."/>
            <person name="Pati A."/>
            <person name="d'Haeseleer P."/>
            <person name="Woyke T."/>
            <person name="Kyrpides N.C."/>
        </authorList>
    </citation>
    <scope>NUCLEOTIDE SEQUENCE [LARGE SCALE GENOMIC DNA]</scope>
    <source>
        <strain>HL-EbGR7</strain>
    </source>
</reference>
<gene>
    <name evidence="1" type="primary">smg</name>
    <name type="ordered locus">Tgr7_0192</name>
</gene>
<protein>
    <recommendedName>
        <fullName evidence="1">Protein Smg homolog</fullName>
    </recommendedName>
</protein>
<feature type="chain" id="PRO_1000147000" description="Protein Smg homolog">
    <location>
        <begin position="1"/>
        <end position="158"/>
    </location>
</feature>
<organism>
    <name type="scientific">Thioalkalivibrio sulfidiphilus (strain HL-EbGR7)</name>
    <dbReference type="NCBI Taxonomy" id="396588"/>
    <lineage>
        <taxon>Bacteria</taxon>
        <taxon>Pseudomonadati</taxon>
        <taxon>Pseudomonadota</taxon>
        <taxon>Gammaproteobacteria</taxon>
        <taxon>Chromatiales</taxon>
        <taxon>Ectothiorhodospiraceae</taxon>
        <taxon>Thioalkalivibrio</taxon>
    </lineage>
</organism>